<feature type="signal peptide" evidence="1">
    <location>
        <begin position="1"/>
        <end position="19"/>
    </location>
</feature>
<feature type="chain" id="PRO_1000134839" description="Flagellar P-ring protein">
    <location>
        <begin position="20"/>
        <end position="365"/>
    </location>
</feature>
<dbReference type="EMBL" id="CU928145">
    <property type="protein sequence ID" value="CAU97052.1"/>
    <property type="molecule type" value="Genomic_DNA"/>
</dbReference>
<dbReference type="RefSeq" id="WP_000589326.1">
    <property type="nucleotide sequence ID" value="NZ_CP028304.1"/>
</dbReference>
<dbReference type="SMR" id="B7LG14"/>
<dbReference type="GeneID" id="75203667"/>
<dbReference type="KEGG" id="eck:EC55989_1193"/>
<dbReference type="HOGENOM" id="CLU_045235_1_0_6"/>
<dbReference type="Proteomes" id="UP000000746">
    <property type="component" value="Chromosome"/>
</dbReference>
<dbReference type="GO" id="GO:0009428">
    <property type="term" value="C:bacterial-type flagellum basal body, distal rod, P ring"/>
    <property type="evidence" value="ECO:0007669"/>
    <property type="project" value="InterPro"/>
</dbReference>
<dbReference type="GO" id="GO:0030288">
    <property type="term" value="C:outer membrane-bounded periplasmic space"/>
    <property type="evidence" value="ECO:0007669"/>
    <property type="project" value="InterPro"/>
</dbReference>
<dbReference type="GO" id="GO:0005198">
    <property type="term" value="F:structural molecule activity"/>
    <property type="evidence" value="ECO:0007669"/>
    <property type="project" value="InterPro"/>
</dbReference>
<dbReference type="GO" id="GO:0071973">
    <property type="term" value="P:bacterial-type flagellum-dependent cell motility"/>
    <property type="evidence" value="ECO:0007669"/>
    <property type="project" value="InterPro"/>
</dbReference>
<dbReference type="HAMAP" id="MF_00416">
    <property type="entry name" value="FlgI"/>
    <property type="match status" value="1"/>
</dbReference>
<dbReference type="InterPro" id="IPR001782">
    <property type="entry name" value="Flag_FlgI"/>
</dbReference>
<dbReference type="NCBIfam" id="NF003676">
    <property type="entry name" value="PRK05303.1"/>
    <property type="match status" value="1"/>
</dbReference>
<dbReference type="PANTHER" id="PTHR30381">
    <property type="entry name" value="FLAGELLAR P-RING PERIPLASMIC PROTEIN FLGI"/>
    <property type="match status" value="1"/>
</dbReference>
<dbReference type="PANTHER" id="PTHR30381:SF0">
    <property type="entry name" value="FLAGELLAR P-RING PROTEIN"/>
    <property type="match status" value="1"/>
</dbReference>
<dbReference type="Pfam" id="PF02119">
    <property type="entry name" value="FlgI"/>
    <property type="match status" value="1"/>
</dbReference>
<dbReference type="PRINTS" id="PR01010">
    <property type="entry name" value="FLGPRINGFLGI"/>
</dbReference>
<reference key="1">
    <citation type="journal article" date="2009" name="PLoS Genet.">
        <title>Organised genome dynamics in the Escherichia coli species results in highly diverse adaptive paths.</title>
        <authorList>
            <person name="Touchon M."/>
            <person name="Hoede C."/>
            <person name="Tenaillon O."/>
            <person name="Barbe V."/>
            <person name="Baeriswyl S."/>
            <person name="Bidet P."/>
            <person name="Bingen E."/>
            <person name="Bonacorsi S."/>
            <person name="Bouchier C."/>
            <person name="Bouvet O."/>
            <person name="Calteau A."/>
            <person name="Chiapello H."/>
            <person name="Clermont O."/>
            <person name="Cruveiller S."/>
            <person name="Danchin A."/>
            <person name="Diard M."/>
            <person name="Dossat C."/>
            <person name="Karoui M.E."/>
            <person name="Frapy E."/>
            <person name="Garry L."/>
            <person name="Ghigo J.M."/>
            <person name="Gilles A.M."/>
            <person name="Johnson J."/>
            <person name="Le Bouguenec C."/>
            <person name="Lescat M."/>
            <person name="Mangenot S."/>
            <person name="Martinez-Jehanne V."/>
            <person name="Matic I."/>
            <person name="Nassif X."/>
            <person name="Oztas S."/>
            <person name="Petit M.A."/>
            <person name="Pichon C."/>
            <person name="Rouy Z."/>
            <person name="Ruf C.S."/>
            <person name="Schneider D."/>
            <person name="Tourret J."/>
            <person name="Vacherie B."/>
            <person name="Vallenet D."/>
            <person name="Medigue C."/>
            <person name="Rocha E.P.C."/>
            <person name="Denamur E."/>
        </authorList>
    </citation>
    <scope>NUCLEOTIDE SEQUENCE [LARGE SCALE GENOMIC DNA]</scope>
    <source>
        <strain>55989 / EAEC</strain>
    </source>
</reference>
<protein>
    <recommendedName>
        <fullName evidence="1">Flagellar P-ring protein</fullName>
    </recommendedName>
    <alternativeName>
        <fullName evidence="1">Basal body P-ring protein</fullName>
    </alternativeName>
</protein>
<organism>
    <name type="scientific">Escherichia coli (strain 55989 / EAEC)</name>
    <dbReference type="NCBI Taxonomy" id="585055"/>
    <lineage>
        <taxon>Bacteria</taxon>
        <taxon>Pseudomonadati</taxon>
        <taxon>Pseudomonadota</taxon>
        <taxon>Gammaproteobacteria</taxon>
        <taxon>Enterobacterales</taxon>
        <taxon>Enterobacteriaceae</taxon>
        <taxon>Escherichia</taxon>
    </lineage>
</organism>
<comment type="function">
    <text evidence="1">Assembles around the rod to form the L-ring and probably protects the motor/basal body from shearing forces during rotation.</text>
</comment>
<comment type="subunit">
    <text evidence="1">The basal body constitutes a major portion of the flagellar organelle and consists of four rings (L,P,S, and M) mounted on a central rod.</text>
</comment>
<comment type="subcellular location">
    <subcellularLocation>
        <location evidence="1">Periplasm</location>
    </subcellularLocation>
    <subcellularLocation>
        <location evidence="1">Bacterial flagellum basal body</location>
    </subcellularLocation>
</comment>
<comment type="similarity">
    <text evidence="1">Belongs to the FlgI family.</text>
</comment>
<sequence>MIKFLSALILLLVTTAAQAERIRDLTSVQGVRQNSLIGYGLVVGLDGTGDQTTQTPFTTQTLNNMLSQLGITVPTGTNMQLKNVAAVMVTASLPPFGRQGQTIDVVVSSMGNAKSLRGGTLLMTPLKGVDSQVYALAQGNILVGGAGASAGGSSVQVNQLNGGRITNGAVIERELPSQFGVGNTLNLQLNDEDFSMAQQIADTINRVRGYGSATALDARTIQVRVPSGNSSQVRFLADIQNMQVNVTPQDAKVVINSRTGSVVMNREVTLDSCAVAQGNLSVTVNRQANVSQPDTPFGGGQTVVTPQTQIDLRQSGGSLQSVRSSASLNNVVRALNALGATPMDLMSILQSMQSAGCLRAKLEII</sequence>
<keyword id="KW-0975">Bacterial flagellum</keyword>
<keyword id="KW-0574">Periplasm</keyword>
<keyword id="KW-1185">Reference proteome</keyword>
<keyword id="KW-0732">Signal</keyword>
<gene>
    <name evidence="1" type="primary">flgI</name>
    <name type="ordered locus">EC55989_1193</name>
</gene>
<evidence type="ECO:0000255" key="1">
    <source>
        <dbReference type="HAMAP-Rule" id="MF_00416"/>
    </source>
</evidence>
<name>FLGI_ECO55</name>
<accession>B7LG14</accession>
<proteinExistence type="inferred from homology"/>